<keyword id="KW-0963">Cytoplasm</keyword>
<keyword id="KW-0378">Hydrolase</keyword>
<keyword id="KW-0645">Protease</keyword>
<keyword id="KW-0720">Serine protease</keyword>
<keyword id="KW-0865">Zymogen</keyword>
<reference key="1">
    <citation type="journal article" date="2006" name="Mol. Microbiol.">
        <title>Role of pathogenicity island-associated integrases in the genome plasticity of uropathogenic Escherichia coli strain 536.</title>
        <authorList>
            <person name="Hochhut B."/>
            <person name="Wilde C."/>
            <person name="Balling G."/>
            <person name="Middendorf B."/>
            <person name="Dobrindt U."/>
            <person name="Brzuszkiewicz E."/>
            <person name="Gottschalk G."/>
            <person name="Carniel E."/>
            <person name="Hacker J."/>
        </authorList>
    </citation>
    <scope>NUCLEOTIDE SEQUENCE [LARGE SCALE GENOMIC DNA]</scope>
    <source>
        <strain>536 / UPEC</strain>
    </source>
</reference>
<organism>
    <name type="scientific">Escherichia coli O6:K15:H31 (strain 536 / UPEC)</name>
    <dbReference type="NCBI Taxonomy" id="362663"/>
    <lineage>
        <taxon>Bacteria</taxon>
        <taxon>Pseudomonadati</taxon>
        <taxon>Pseudomonadota</taxon>
        <taxon>Gammaproteobacteria</taxon>
        <taxon>Enterobacterales</taxon>
        <taxon>Enterobacteriaceae</taxon>
        <taxon>Escherichia</taxon>
    </lineage>
</organism>
<dbReference type="EC" id="3.4.21.92" evidence="2"/>
<dbReference type="EMBL" id="CP000247">
    <property type="protein sequence ID" value="ABG68527.1"/>
    <property type="molecule type" value="Genomic_DNA"/>
</dbReference>
<dbReference type="RefSeq" id="WP_000122253.1">
    <property type="nucleotide sequence ID" value="NC_008253.1"/>
</dbReference>
<dbReference type="SMR" id="Q0TKK4"/>
<dbReference type="MEROPS" id="S14.001"/>
<dbReference type="GeneID" id="93777017"/>
<dbReference type="KEGG" id="ecp:ECP_0498"/>
<dbReference type="HOGENOM" id="CLU_058707_3_2_6"/>
<dbReference type="Proteomes" id="UP000009182">
    <property type="component" value="Chromosome"/>
</dbReference>
<dbReference type="GO" id="GO:0005737">
    <property type="term" value="C:cytoplasm"/>
    <property type="evidence" value="ECO:0007669"/>
    <property type="project" value="UniProtKB-SubCell"/>
</dbReference>
<dbReference type="GO" id="GO:0009368">
    <property type="term" value="C:endopeptidase Clp complex"/>
    <property type="evidence" value="ECO:0007669"/>
    <property type="project" value="TreeGrafter"/>
</dbReference>
<dbReference type="GO" id="GO:0004176">
    <property type="term" value="F:ATP-dependent peptidase activity"/>
    <property type="evidence" value="ECO:0007669"/>
    <property type="project" value="InterPro"/>
</dbReference>
<dbReference type="GO" id="GO:0051117">
    <property type="term" value="F:ATPase binding"/>
    <property type="evidence" value="ECO:0007669"/>
    <property type="project" value="TreeGrafter"/>
</dbReference>
<dbReference type="GO" id="GO:0004252">
    <property type="term" value="F:serine-type endopeptidase activity"/>
    <property type="evidence" value="ECO:0007669"/>
    <property type="project" value="UniProtKB-UniRule"/>
</dbReference>
<dbReference type="GO" id="GO:0006515">
    <property type="term" value="P:protein quality control for misfolded or incompletely synthesized proteins"/>
    <property type="evidence" value="ECO:0007669"/>
    <property type="project" value="TreeGrafter"/>
</dbReference>
<dbReference type="CDD" id="cd07017">
    <property type="entry name" value="S14_ClpP_2"/>
    <property type="match status" value="1"/>
</dbReference>
<dbReference type="FunFam" id="3.90.226.10:FF:000001">
    <property type="entry name" value="ATP-dependent Clp protease proteolytic subunit"/>
    <property type="match status" value="1"/>
</dbReference>
<dbReference type="Gene3D" id="3.90.226.10">
    <property type="entry name" value="2-enoyl-CoA Hydratase, Chain A, domain 1"/>
    <property type="match status" value="1"/>
</dbReference>
<dbReference type="HAMAP" id="MF_00444">
    <property type="entry name" value="ClpP"/>
    <property type="match status" value="1"/>
</dbReference>
<dbReference type="InterPro" id="IPR001907">
    <property type="entry name" value="ClpP"/>
</dbReference>
<dbReference type="InterPro" id="IPR029045">
    <property type="entry name" value="ClpP/crotonase-like_dom_sf"/>
</dbReference>
<dbReference type="InterPro" id="IPR023562">
    <property type="entry name" value="ClpP/TepA"/>
</dbReference>
<dbReference type="InterPro" id="IPR033135">
    <property type="entry name" value="ClpP_His_AS"/>
</dbReference>
<dbReference type="InterPro" id="IPR018215">
    <property type="entry name" value="ClpP_Ser_AS"/>
</dbReference>
<dbReference type="NCBIfam" id="TIGR00493">
    <property type="entry name" value="clpP"/>
    <property type="match status" value="1"/>
</dbReference>
<dbReference type="NCBIfam" id="NF001368">
    <property type="entry name" value="PRK00277.1"/>
    <property type="match status" value="1"/>
</dbReference>
<dbReference type="NCBIfam" id="NF009205">
    <property type="entry name" value="PRK12553.1"/>
    <property type="match status" value="1"/>
</dbReference>
<dbReference type="PANTHER" id="PTHR10381">
    <property type="entry name" value="ATP-DEPENDENT CLP PROTEASE PROTEOLYTIC SUBUNIT"/>
    <property type="match status" value="1"/>
</dbReference>
<dbReference type="PANTHER" id="PTHR10381:SF70">
    <property type="entry name" value="ATP-DEPENDENT CLP PROTEASE PROTEOLYTIC SUBUNIT"/>
    <property type="match status" value="1"/>
</dbReference>
<dbReference type="Pfam" id="PF00574">
    <property type="entry name" value="CLP_protease"/>
    <property type="match status" value="1"/>
</dbReference>
<dbReference type="PRINTS" id="PR00127">
    <property type="entry name" value="CLPPROTEASEP"/>
</dbReference>
<dbReference type="SUPFAM" id="SSF52096">
    <property type="entry name" value="ClpP/crotonase"/>
    <property type="match status" value="1"/>
</dbReference>
<dbReference type="PROSITE" id="PS00382">
    <property type="entry name" value="CLP_PROTEASE_HIS"/>
    <property type="match status" value="1"/>
</dbReference>
<dbReference type="PROSITE" id="PS00381">
    <property type="entry name" value="CLP_PROTEASE_SER"/>
    <property type="match status" value="1"/>
</dbReference>
<proteinExistence type="inferred from homology"/>
<comment type="function">
    <text evidence="2">Cleaves peptides in various proteins in a process that requires ATP hydrolysis. Has a chymotrypsin-like activity. Plays a major role in the degradation of misfolded proteins.</text>
</comment>
<comment type="catalytic activity">
    <reaction evidence="2">
        <text>Hydrolysis of proteins to small peptides in the presence of ATP and magnesium. alpha-casein is the usual test substrate. In the absence of ATP, only oligopeptides shorter than five residues are hydrolyzed (such as succinyl-Leu-Tyr-|-NHMec, and Leu-Tyr-Leu-|-Tyr-Trp, in which cleavage of the -Tyr-|-Leu- and -Tyr-|-Trp bonds also occurs).</text>
        <dbReference type="EC" id="3.4.21.92"/>
    </reaction>
</comment>
<comment type="subunit">
    <text evidence="2">Fourteen ClpP subunits assemble into 2 heptameric rings which stack back to back to give a disk-like structure with a central cavity, resembling the structure of eukaryotic proteasomes. Component of the ClpAP and ClpXP complexes.</text>
</comment>
<comment type="subcellular location">
    <subcellularLocation>
        <location evidence="2">Cytoplasm</location>
    </subcellularLocation>
</comment>
<comment type="similarity">
    <text evidence="2">Belongs to the peptidase S14 family.</text>
</comment>
<sequence length="207" mass="23187">MSYSGERDNFAPHMALVPMVIEQTSRGERSFDIYSRLLKERVIFLTGQVEDHMANLIVAQMLFLEAENPEKDIYLYINSPGGVITAGMSIYDTMQFIKPDVSTICMGQAASMGAFLLTAGAKGKRFCLPNSRVMIHQPLGGYQGQATDIEIHAREILKVKGRMNELMALHTGQSLEQIERDTERDRFLSAPEAVEYGLVDSILTHRN</sequence>
<evidence type="ECO:0000250" key="1"/>
<evidence type="ECO:0000255" key="2">
    <source>
        <dbReference type="HAMAP-Rule" id="MF_00444"/>
    </source>
</evidence>
<feature type="propeptide" id="PRO_0000268016" evidence="1">
    <location>
        <begin position="1"/>
        <end position="14"/>
    </location>
</feature>
<feature type="chain" id="PRO_0000252817" description="ATP-dependent Clp protease proteolytic subunit">
    <location>
        <begin position="15"/>
        <end position="207"/>
    </location>
</feature>
<feature type="active site" description="Nucleophile" evidence="2">
    <location>
        <position position="111"/>
    </location>
</feature>
<feature type="active site" evidence="2">
    <location>
        <position position="136"/>
    </location>
</feature>
<gene>
    <name evidence="2" type="primary">clpP</name>
    <name type="ordered locus">ECP_0498</name>
</gene>
<accession>Q0TKK4</accession>
<protein>
    <recommendedName>
        <fullName evidence="2">ATP-dependent Clp protease proteolytic subunit</fullName>
        <ecNumber evidence="2">3.4.21.92</ecNumber>
    </recommendedName>
    <alternativeName>
        <fullName evidence="2">Endopeptidase Clp</fullName>
    </alternativeName>
</protein>
<name>CLPP_ECOL5</name>